<organism>
    <name type="scientific">Escherichia coli O7:K1 (strain IAI39 / ExPEC)</name>
    <dbReference type="NCBI Taxonomy" id="585057"/>
    <lineage>
        <taxon>Bacteria</taxon>
        <taxon>Pseudomonadati</taxon>
        <taxon>Pseudomonadota</taxon>
        <taxon>Gammaproteobacteria</taxon>
        <taxon>Enterobacterales</taxon>
        <taxon>Enterobacteriaceae</taxon>
        <taxon>Escherichia</taxon>
    </lineage>
</organism>
<keyword id="KW-0997">Cell inner membrane</keyword>
<keyword id="KW-1003">Cell membrane</keyword>
<keyword id="KW-0472">Membrane</keyword>
<keyword id="KW-0520">NAD</keyword>
<keyword id="KW-0874">Quinone</keyword>
<keyword id="KW-1278">Translocase</keyword>
<keyword id="KW-0812">Transmembrane</keyword>
<keyword id="KW-1133">Transmembrane helix</keyword>
<keyword id="KW-0813">Transport</keyword>
<keyword id="KW-0830">Ubiquinone</keyword>
<gene>
    <name evidence="1" type="primary">nuoN</name>
    <name type="ordered locus">ECIAI39_2423</name>
</gene>
<accession>B7NNV5</accession>
<feature type="chain" id="PRO_1000145867" description="NADH-quinone oxidoreductase subunit N">
    <location>
        <begin position="1"/>
        <end position="485"/>
    </location>
</feature>
<feature type="transmembrane region" description="Helical" evidence="1">
    <location>
        <begin position="8"/>
        <end position="28"/>
    </location>
</feature>
<feature type="transmembrane region" description="Helical" evidence="1">
    <location>
        <begin position="35"/>
        <end position="55"/>
    </location>
</feature>
<feature type="transmembrane region" description="Helical" evidence="1">
    <location>
        <begin position="71"/>
        <end position="91"/>
    </location>
</feature>
<feature type="transmembrane region" description="Helical" evidence="1">
    <location>
        <begin position="105"/>
        <end position="125"/>
    </location>
</feature>
<feature type="transmembrane region" description="Helical" evidence="1">
    <location>
        <begin position="127"/>
        <end position="147"/>
    </location>
</feature>
<feature type="transmembrane region" description="Helical" evidence="1">
    <location>
        <begin position="159"/>
        <end position="179"/>
    </location>
</feature>
<feature type="transmembrane region" description="Helical" evidence="1">
    <location>
        <begin position="203"/>
        <end position="223"/>
    </location>
</feature>
<feature type="transmembrane region" description="Helical" evidence="1">
    <location>
        <begin position="235"/>
        <end position="255"/>
    </location>
</feature>
<feature type="transmembrane region" description="Helical" evidence="1">
    <location>
        <begin position="271"/>
        <end position="291"/>
    </location>
</feature>
<feature type="transmembrane region" description="Helical" evidence="1">
    <location>
        <begin position="297"/>
        <end position="317"/>
    </location>
</feature>
<feature type="transmembrane region" description="Helical" evidence="1">
    <location>
        <begin position="326"/>
        <end position="346"/>
    </location>
</feature>
<feature type="transmembrane region" description="Helical" evidence="1">
    <location>
        <begin position="373"/>
        <end position="393"/>
    </location>
</feature>
<feature type="transmembrane region" description="Helical" evidence="1">
    <location>
        <begin position="408"/>
        <end position="430"/>
    </location>
</feature>
<feature type="transmembrane region" description="Helical" evidence="1">
    <location>
        <begin position="455"/>
        <end position="475"/>
    </location>
</feature>
<comment type="function">
    <text evidence="1">NDH-1 shuttles electrons from NADH, via FMN and iron-sulfur (Fe-S) centers, to quinones in the respiratory chain. The immediate electron acceptor for the enzyme in this species is believed to be ubiquinone. Couples the redox reaction to proton translocation (for every two electrons transferred, four hydrogen ions are translocated across the cytoplasmic membrane), and thus conserves the redox energy in a proton gradient.</text>
</comment>
<comment type="catalytic activity">
    <reaction evidence="1">
        <text>a quinone + NADH + 5 H(+)(in) = a quinol + NAD(+) + 4 H(+)(out)</text>
        <dbReference type="Rhea" id="RHEA:57888"/>
        <dbReference type="ChEBI" id="CHEBI:15378"/>
        <dbReference type="ChEBI" id="CHEBI:24646"/>
        <dbReference type="ChEBI" id="CHEBI:57540"/>
        <dbReference type="ChEBI" id="CHEBI:57945"/>
        <dbReference type="ChEBI" id="CHEBI:132124"/>
    </reaction>
</comment>
<comment type="subunit">
    <text evidence="1">NDH-1 is composed of 13 different subunits. Subunits NuoA, H, J, K, L, M, N constitute the membrane sector of the complex.</text>
</comment>
<comment type="subcellular location">
    <subcellularLocation>
        <location evidence="1">Cell inner membrane</location>
        <topology evidence="1">Multi-pass membrane protein</topology>
    </subcellularLocation>
</comment>
<comment type="similarity">
    <text evidence="1">Belongs to the complex I subunit 2 family.</text>
</comment>
<proteinExistence type="inferred from homology"/>
<evidence type="ECO:0000255" key="1">
    <source>
        <dbReference type="HAMAP-Rule" id="MF_00445"/>
    </source>
</evidence>
<sequence>MTITPQNLIALLPLLIVGLTVVVVMLSIAWRRNHFLNATLSVIGLNAALVSLWFVGQAGAMDVTPLMRVDGFAMLYTGLVLLASLATCTFAYPWLEGYNDNKDEFYLLVLIAALGGILLANANHLASLFLGIELISLPLFGLVGYAFRQKRSLEASIKYTILSAAASSFLLFGMALVYAQSGDLSFVALGKNLGDGMLNEPLLLAGFGLMIVGLGFKLSLVPFHLWTPDVYQGAPAPVSTFLATASKIAIFGVVMRLFLYAPVGDSEAIRVVLAIIAFASIIFGNLMALSQTNIKRLLGYSSISHLGYLLVALIALQTGEMSMEAVGVYLAGYLFSSLGAFGVVSLMSSPYRGPDADSLFSYRGLFWHRPILAAVMTVMMLSLAGIPMTLGFIGKFYVLAVGVQAHLWWLVGAVVVGSAIGLYYYLRVAVSLYLHAPEQPGRDAPSNWQYSAGGIVVLISALLVLVLGIWPQPLISIVRLAMPLM</sequence>
<reference key="1">
    <citation type="journal article" date="2009" name="PLoS Genet.">
        <title>Organised genome dynamics in the Escherichia coli species results in highly diverse adaptive paths.</title>
        <authorList>
            <person name="Touchon M."/>
            <person name="Hoede C."/>
            <person name="Tenaillon O."/>
            <person name="Barbe V."/>
            <person name="Baeriswyl S."/>
            <person name="Bidet P."/>
            <person name="Bingen E."/>
            <person name="Bonacorsi S."/>
            <person name="Bouchier C."/>
            <person name="Bouvet O."/>
            <person name="Calteau A."/>
            <person name="Chiapello H."/>
            <person name="Clermont O."/>
            <person name="Cruveiller S."/>
            <person name="Danchin A."/>
            <person name="Diard M."/>
            <person name="Dossat C."/>
            <person name="Karoui M.E."/>
            <person name="Frapy E."/>
            <person name="Garry L."/>
            <person name="Ghigo J.M."/>
            <person name="Gilles A.M."/>
            <person name="Johnson J."/>
            <person name="Le Bouguenec C."/>
            <person name="Lescat M."/>
            <person name="Mangenot S."/>
            <person name="Martinez-Jehanne V."/>
            <person name="Matic I."/>
            <person name="Nassif X."/>
            <person name="Oztas S."/>
            <person name="Petit M.A."/>
            <person name="Pichon C."/>
            <person name="Rouy Z."/>
            <person name="Ruf C.S."/>
            <person name="Schneider D."/>
            <person name="Tourret J."/>
            <person name="Vacherie B."/>
            <person name="Vallenet D."/>
            <person name="Medigue C."/>
            <person name="Rocha E.P.C."/>
            <person name="Denamur E."/>
        </authorList>
    </citation>
    <scope>NUCLEOTIDE SEQUENCE [LARGE SCALE GENOMIC DNA]</scope>
    <source>
        <strain>IAI39 / ExPEC</strain>
    </source>
</reference>
<dbReference type="EC" id="7.1.1.-" evidence="1"/>
<dbReference type="EMBL" id="CU928164">
    <property type="protein sequence ID" value="CAR18549.1"/>
    <property type="molecule type" value="Genomic_DNA"/>
</dbReference>
<dbReference type="RefSeq" id="WP_000156699.1">
    <property type="nucleotide sequence ID" value="NC_011750.1"/>
</dbReference>
<dbReference type="RefSeq" id="YP_002408379.1">
    <property type="nucleotide sequence ID" value="NC_011750.1"/>
</dbReference>
<dbReference type="SMR" id="B7NNV5"/>
<dbReference type="STRING" id="585057.ECIAI39_2423"/>
<dbReference type="KEGG" id="ect:ECIAI39_2423"/>
<dbReference type="PATRIC" id="fig|585057.6.peg.2525"/>
<dbReference type="HOGENOM" id="CLU_007100_1_5_6"/>
<dbReference type="Proteomes" id="UP000000749">
    <property type="component" value="Chromosome"/>
</dbReference>
<dbReference type="GO" id="GO:0005886">
    <property type="term" value="C:plasma membrane"/>
    <property type="evidence" value="ECO:0007669"/>
    <property type="project" value="UniProtKB-SubCell"/>
</dbReference>
<dbReference type="GO" id="GO:0008137">
    <property type="term" value="F:NADH dehydrogenase (ubiquinone) activity"/>
    <property type="evidence" value="ECO:0007669"/>
    <property type="project" value="InterPro"/>
</dbReference>
<dbReference type="GO" id="GO:0050136">
    <property type="term" value="F:NADH:ubiquinone reductase (non-electrogenic) activity"/>
    <property type="evidence" value="ECO:0007669"/>
    <property type="project" value="UniProtKB-UniRule"/>
</dbReference>
<dbReference type="GO" id="GO:0048038">
    <property type="term" value="F:quinone binding"/>
    <property type="evidence" value="ECO:0007669"/>
    <property type="project" value="UniProtKB-KW"/>
</dbReference>
<dbReference type="GO" id="GO:0042773">
    <property type="term" value="P:ATP synthesis coupled electron transport"/>
    <property type="evidence" value="ECO:0007669"/>
    <property type="project" value="InterPro"/>
</dbReference>
<dbReference type="HAMAP" id="MF_00445">
    <property type="entry name" value="NDH1_NuoN_1"/>
    <property type="match status" value="1"/>
</dbReference>
<dbReference type="InterPro" id="IPR010096">
    <property type="entry name" value="NADH-Q_OxRdtase_suN/2"/>
</dbReference>
<dbReference type="InterPro" id="IPR001750">
    <property type="entry name" value="ND/Mrp_TM"/>
</dbReference>
<dbReference type="NCBIfam" id="TIGR01770">
    <property type="entry name" value="NDH_I_N"/>
    <property type="match status" value="1"/>
</dbReference>
<dbReference type="NCBIfam" id="NF004439">
    <property type="entry name" value="PRK05777.1-1"/>
    <property type="match status" value="1"/>
</dbReference>
<dbReference type="PANTHER" id="PTHR22773">
    <property type="entry name" value="NADH DEHYDROGENASE"/>
    <property type="match status" value="1"/>
</dbReference>
<dbReference type="Pfam" id="PF00361">
    <property type="entry name" value="Proton_antipo_M"/>
    <property type="match status" value="1"/>
</dbReference>
<name>NUON_ECO7I</name>
<protein>
    <recommendedName>
        <fullName evidence="1">NADH-quinone oxidoreductase subunit N</fullName>
        <ecNumber evidence="1">7.1.1.-</ecNumber>
    </recommendedName>
    <alternativeName>
        <fullName evidence="1">NADH dehydrogenase I subunit N</fullName>
    </alternativeName>
    <alternativeName>
        <fullName evidence="1">NDH-1 subunit N</fullName>
    </alternativeName>
</protein>